<evidence type="ECO:0000250" key="1">
    <source>
        <dbReference type="UniProtKB" id="Q6ZUT6"/>
    </source>
</evidence>
<evidence type="ECO:0000255" key="2"/>
<evidence type="ECO:0000256" key="3">
    <source>
        <dbReference type="SAM" id="MobiDB-lite"/>
    </source>
</evidence>
<dbReference type="EMBL" id="CR858274">
    <property type="protein sequence ID" value="CAH90511.1"/>
    <property type="molecule type" value="mRNA"/>
</dbReference>
<dbReference type="RefSeq" id="NP_001127297.1">
    <property type="nucleotide sequence ID" value="NM_001133825.2"/>
</dbReference>
<dbReference type="FunCoup" id="Q5RCJ6">
    <property type="interactions" value="45"/>
</dbReference>
<dbReference type="STRING" id="9601.ENSPPYP00000007188"/>
<dbReference type="GeneID" id="100174355"/>
<dbReference type="KEGG" id="pon:100174355"/>
<dbReference type="CTD" id="388115"/>
<dbReference type="eggNOG" id="ENOG502S0JY">
    <property type="taxonomic scope" value="Eukaryota"/>
</dbReference>
<dbReference type="InParanoid" id="Q5RCJ6"/>
<dbReference type="OrthoDB" id="10058133at2759"/>
<dbReference type="Proteomes" id="UP000001595">
    <property type="component" value="Unplaced"/>
</dbReference>
<dbReference type="InterPro" id="IPR029336">
    <property type="entry name" value="DUF4594"/>
</dbReference>
<dbReference type="PANTHER" id="PTHR15635">
    <property type="entry name" value="COILED-COIL DOMAIN CONTAINING PROTEIN 9"/>
    <property type="match status" value="1"/>
</dbReference>
<dbReference type="PANTHER" id="PTHR15635:SF10">
    <property type="entry name" value="COILED-COIL DOMAIN-CONTAINING PROTEIN 9B"/>
    <property type="match status" value="1"/>
</dbReference>
<dbReference type="Pfam" id="PF15266">
    <property type="entry name" value="DUF4594"/>
    <property type="match status" value="1"/>
</dbReference>
<sequence length="535" mass="57657">MISCAEQRSRQGEAGRGPAPVAPAFLPIWLPRGCSGILSVPAVAMHSAGPPRAESSMSRQEKDAELDRRIVALRKKNQALLRRYQEIQEDRRQAEQGGMAVTTPALLRPDGLTVTISQVPGEKRVVSRNWARGTCGPGVMNEMVEDEDAEDHGGTFCLGELVELAVTMENKAEAKRIVSEKPTRARNQGTEGSPGGRMTRSPPTQVAISSDSAWKGAWEPRRSRPMGEPPEAGWDYAQWKQEREQIDLARLARHRDAQGDWRRPWDLDKAKPTLQDCSQLRGEGPARAGSRRGPRSHRKLQPPPLLPDGEGRGGQASRPSVAPATGSKARGKERLTGRARRWDMKEDKEELESQEGSQSTRETPSEEEQAQKQSGMEQGRLGSAPAASPALASPEGPKGESAASTASSVPCSPQEPDLTPLDLSLGGAGIPGPRESTCVLSLRPGAQESPVSWPEGSEQQPLGWNDHQAELEVQTCPEPQSGTGLPEPREDRSGKAGAQQGLAPRSRPPRGGSQRSRGTAGVRHRTGRPGPAGRC</sequence>
<gene>
    <name evidence="1" type="primary">CCDC9B</name>
</gene>
<accession>Q5RCJ6</accession>
<organism>
    <name type="scientific">Pongo abelii</name>
    <name type="common">Sumatran orangutan</name>
    <name type="synonym">Pongo pygmaeus abelii</name>
    <dbReference type="NCBI Taxonomy" id="9601"/>
    <lineage>
        <taxon>Eukaryota</taxon>
        <taxon>Metazoa</taxon>
        <taxon>Chordata</taxon>
        <taxon>Craniata</taxon>
        <taxon>Vertebrata</taxon>
        <taxon>Euteleostomi</taxon>
        <taxon>Mammalia</taxon>
        <taxon>Eutheria</taxon>
        <taxon>Euarchontoglires</taxon>
        <taxon>Primates</taxon>
        <taxon>Haplorrhini</taxon>
        <taxon>Catarrhini</taxon>
        <taxon>Hominidae</taxon>
        <taxon>Pongo</taxon>
    </lineage>
</organism>
<name>CCD9B_PONAB</name>
<proteinExistence type="evidence at transcript level"/>
<reference key="1">
    <citation type="submission" date="2004-11" db="EMBL/GenBank/DDBJ databases">
        <authorList>
            <consortium name="The German cDNA consortium"/>
        </authorList>
    </citation>
    <scope>NUCLEOTIDE SEQUENCE [LARGE SCALE MRNA]</scope>
    <source>
        <tissue>Kidney</tissue>
    </source>
</reference>
<protein>
    <recommendedName>
        <fullName evidence="1">Coiled-coil domain-containing protein 9B</fullName>
    </recommendedName>
</protein>
<feature type="chain" id="PRO_0000295735" description="Coiled-coil domain-containing protein 9B">
    <location>
        <begin position="1"/>
        <end position="535"/>
    </location>
</feature>
<feature type="region of interest" description="Disordered" evidence="3">
    <location>
        <begin position="175"/>
        <end position="233"/>
    </location>
</feature>
<feature type="region of interest" description="Disordered" evidence="3">
    <location>
        <begin position="263"/>
        <end position="535"/>
    </location>
</feature>
<feature type="coiled-coil region" evidence="2">
    <location>
        <begin position="60"/>
        <end position="97"/>
    </location>
</feature>
<feature type="compositionally biased region" description="Polar residues" evidence="3">
    <location>
        <begin position="201"/>
        <end position="212"/>
    </location>
</feature>
<feature type="compositionally biased region" description="Basic residues" evidence="3">
    <location>
        <begin position="289"/>
        <end position="300"/>
    </location>
</feature>
<feature type="compositionally biased region" description="Basic and acidic residues" evidence="3">
    <location>
        <begin position="330"/>
        <end position="348"/>
    </location>
</feature>
<feature type="compositionally biased region" description="Low complexity" evidence="3">
    <location>
        <begin position="383"/>
        <end position="394"/>
    </location>
</feature>
<feature type="compositionally biased region" description="Polar residues" evidence="3">
    <location>
        <begin position="402"/>
        <end position="411"/>
    </location>
</feature>
<feature type="compositionally biased region" description="Low complexity" evidence="3">
    <location>
        <begin position="509"/>
        <end position="518"/>
    </location>
</feature>
<feature type="modified residue" description="Phosphoserine" evidence="1">
    <location>
        <position position="201"/>
    </location>
</feature>
<feature type="modified residue" description="Phosphoserine" evidence="1">
    <location>
        <position position="393"/>
    </location>
</feature>
<keyword id="KW-0175">Coiled coil</keyword>
<keyword id="KW-0597">Phosphoprotein</keyword>
<keyword id="KW-1185">Reference proteome</keyword>